<feature type="signal peptide" evidence="1">
    <location>
        <begin position="1"/>
        <end position="19"/>
    </location>
</feature>
<feature type="chain" id="PRO_0000036751" description="Capsid-associated protein AC83">
    <location>
        <begin position="20"/>
        <end position="847"/>
    </location>
</feature>
<feature type="domain" description="Chitin-binding type-2" evidence="2">
    <location>
        <begin position="224"/>
        <end position="282"/>
    </location>
</feature>
<feature type="zinc finger region" description="C2HC BV-type" evidence="3 5">
    <location>
        <begin position="148"/>
        <end position="197"/>
    </location>
</feature>
<feature type="region of interest" description="Disordered" evidence="4">
    <location>
        <begin position="665"/>
        <end position="698"/>
    </location>
</feature>
<feature type="compositionally biased region" description="Acidic residues" evidence="4">
    <location>
        <begin position="681"/>
        <end position="693"/>
    </location>
</feature>
<feature type="glycosylation site" description="N-linked (GlcNAc...) asparagine; by host" evidence="1">
    <location>
        <position position="156"/>
    </location>
</feature>
<feature type="glycosylation site" description="N-linked (GlcNAc...) asparagine; by host" evidence="1">
    <location>
        <position position="211"/>
    </location>
</feature>
<feature type="glycosylation site" description="N-linked (GlcNAc...) asparagine; by host" evidence="1">
    <location>
        <position position="306"/>
    </location>
</feature>
<feature type="glycosylation site" description="N-linked (GlcNAc...) asparagine; by host" evidence="1">
    <location>
        <position position="337"/>
    </location>
</feature>
<feature type="glycosylation site" description="N-linked (GlcNAc...) asparagine; by host" evidence="1">
    <location>
        <position position="500"/>
    </location>
</feature>
<feature type="glycosylation site" description="N-linked (GlcNAc...) asparagine; by host" evidence="1">
    <location>
        <position position="592"/>
    </location>
</feature>
<feature type="glycosylation site" description="N-linked (GlcNAc...) asparagine; by host" evidence="1">
    <location>
        <position position="613"/>
    </location>
</feature>
<feature type="glycosylation site" description="N-linked (GlcNAc...) asparagine; by host" evidence="1">
    <location>
        <position position="639"/>
    </location>
</feature>
<feature type="disulfide bond" evidence="2">
    <location>
        <begin position="208"/>
        <end position="221"/>
    </location>
</feature>
<feature type="disulfide bond" evidence="2">
    <location>
        <begin position="261"/>
        <end position="274"/>
    </location>
</feature>
<feature type="sequence conflict" description="In Ref. 2; CAA50547." evidence="6" ref="2">
    <original>A</original>
    <variation>T</variation>
    <location>
        <position position="202"/>
    </location>
</feature>
<feature type="sequence conflict" description="In Ref. 2; CAA50547." evidence="6" ref="2">
    <original>G</original>
    <variation>D</variation>
    <location>
        <position position="328"/>
    </location>
</feature>
<feature type="sequence conflict" description="In Ref. 2; CAA50547." evidence="6" ref="2">
    <original>S</original>
    <variation>T</variation>
    <location>
        <position position="433"/>
    </location>
</feature>
<feature type="sequence conflict" description="In Ref. 2; CAA50547." evidence="6" ref="2">
    <original>A</original>
    <variation>T</variation>
    <location>
        <position position="469"/>
    </location>
</feature>
<gene>
    <name type="primary">p95</name>
    <name type="ORF">ORF83</name>
</gene>
<name>AC83_NPVAC</name>
<sequence>MMSGVMLLMLAIFLIIAFTLMYLAIYFEFDETTFTKRLQVMTEYVKRTNADEPTPDVIGYVSDIMQNTYIVTWFNTVDLSTYHESVHDDRIEIFDFLNQKFQPVDRIVHDRVRANDENPNEFILSGDKADVTMKCPAYFNFDYAQLKCVPVPPCDNKSAGLYPMDERLLDTLVLNQHLDKDYSTNAHLYHPTFYLRCFANGAHAVEECPDNYTFDAETGQCKVNELCENRPDGYILSYFPSNLLVNQFMQCVNGRHVVGECPANKIFDRNLMSCVEAHPCAFNGAGHTYITADIGDTQYFKCLNNNESQLITCINRIRNSDNQYECSGDSRCIDLPNGTGQHVFKHVDDDISYNSGQLVCDNFEVISDIECDQSNVFENALFMDKFRLNMQFPTEVFDGTACVPATADNVNFLRSTFAIENIPNHYGIDMQTSMLGTTEMVKQLVSKDLSLNNDAIFAQWLLYARDKDAIGLNPFTGEPIDCFGDNLYDVFDARRANICNDSGTSVLKTLNFGDGEFLNVLSSTLTGKDEDYRQFCAISYENGQKIVENEHFQRRILTNILQSDVCADLYTTLYQKYTTLNSKYTTTPLQYNHTLVKRPKNIEIYGANTRLKNATIPKNAATIPPVFNPFENQPNNRQNDSILPLFNPFQTTDAVWYSEPGGDDDHWVVAPPTAPPPPPEPEPEPEPEPEPEPELPSPLILDNKDLFYSCHYSVPFFKLTSCHAENDVIIDALNELRNNVKVDADCELAKDLSHVLNAYAYVGNGIGCRSAYDGDAIVVKKEAVPSHVYANLNTQSNDGVKYNRWLHVKNGQYMACPEELYDNNEFKCNIESDKLYYLDNLQEDSIV</sequence>
<comment type="function">
    <text evidence="5">Plays an essential role in nucleocapsid assembly. Essential for the establishment of efficient per os infection.</text>
</comment>
<comment type="subcellular location">
    <subcellularLocation>
        <location evidence="5">Virion</location>
    </subcellularLocation>
    <text evidence="5">Localizes specifically to the ODV envelope.</text>
</comment>
<keyword id="KW-0147">Chitin-binding</keyword>
<keyword id="KW-1015">Disulfide bond</keyword>
<keyword id="KW-0325">Glycoprotein</keyword>
<keyword id="KW-0479">Metal-binding</keyword>
<keyword id="KW-1185">Reference proteome</keyword>
<keyword id="KW-0677">Repeat</keyword>
<keyword id="KW-0732">Signal</keyword>
<keyword id="KW-0946">Virion</keyword>
<keyword id="KW-0862">Zinc</keyword>
<keyword id="KW-0863">Zinc-finger</keyword>
<dbReference type="EMBL" id="L22858">
    <property type="protein sequence ID" value="AAA66713.1"/>
    <property type="molecule type" value="Genomic_DNA"/>
</dbReference>
<dbReference type="EMBL" id="X71415">
    <property type="protein sequence ID" value="CAA50547.1"/>
    <property type="molecule type" value="Genomic_DNA"/>
</dbReference>
<dbReference type="PIR" id="D72860">
    <property type="entry name" value="D72860"/>
</dbReference>
<dbReference type="PIR" id="S36699">
    <property type="entry name" value="S36699"/>
</dbReference>
<dbReference type="SMR" id="Q06670"/>
<dbReference type="CAZy" id="CBM14">
    <property type="family name" value="Carbohydrate-Binding Module Family 14"/>
</dbReference>
<dbReference type="GlyCosmos" id="Q06670">
    <property type="glycosylation" value="8 sites, No reported glycans"/>
</dbReference>
<dbReference type="KEGG" id="vg:1403916"/>
<dbReference type="OrthoDB" id="542at10239"/>
<dbReference type="Proteomes" id="UP000008292">
    <property type="component" value="Segment"/>
</dbReference>
<dbReference type="GO" id="GO:0005576">
    <property type="term" value="C:extracellular region"/>
    <property type="evidence" value="ECO:0007669"/>
    <property type="project" value="InterPro"/>
</dbReference>
<dbReference type="GO" id="GO:0044423">
    <property type="term" value="C:virion component"/>
    <property type="evidence" value="ECO:0007669"/>
    <property type="project" value="UniProtKB-KW"/>
</dbReference>
<dbReference type="GO" id="GO:0008061">
    <property type="term" value="F:chitin binding"/>
    <property type="evidence" value="ECO:0007669"/>
    <property type="project" value="UniProtKB-KW"/>
</dbReference>
<dbReference type="GO" id="GO:0008270">
    <property type="term" value="F:zinc ion binding"/>
    <property type="evidence" value="ECO:0007669"/>
    <property type="project" value="UniProtKB-KW"/>
</dbReference>
<dbReference type="InterPro" id="IPR013682">
    <property type="entry name" value="BaculoV_Vp91_N"/>
</dbReference>
<dbReference type="InterPro" id="IPR002557">
    <property type="entry name" value="Chitin-bd_dom"/>
</dbReference>
<dbReference type="InterPro" id="IPR036508">
    <property type="entry name" value="Chitin-bd_dom_sf"/>
</dbReference>
<dbReference type="InterPro" id="IPR051940">
    <property type="entry name" value="Chitin_bind-dev_reg"/>
</dbReference>
<dbReference type="PANTHER" id="PTHR23301">
    <property type="entry name" value="CHITIN BINDING PERITROPHIN-A"/>
    <property type="match status" value="1"/>
</dbReference>
<dbReference type="PANTHER" id="PTHR23301:SF0">
    <property type="entry name" value="CHITIN-BINDING TYPE-2 DOMAIN-CONTAINING PROTEIN-RELATED"/>
    <property type="match status" value="1"/>
</dbReference>
<dbReference type="Pfam" id="PF08475">
    <property type="entry name" value="Baculo_VP91_N"/>
    <property type="match status" value="1"/>
</dbReference>
<dbReference type="Pfam" id="PF01607">
    <property type="entry name" value="CBM_14"/>
    <property type="match status" value="1"/>
</dbReference>
<dbReference type="SMART" id="SM00494">
    <property type="entry name" value="ChtBD2"/>
    <property type="match status" value="1"/>
</dbReference>
<dbReference type="SUPFAM" id="SSF57625">
    <property type="entry name" value="Invertebrate chitin-binding proteins"/>
    <property type="match status" value="2"/>
</dbReference>
<dbReference type="PROSITE" id="PS50940">
    <property type="entry name" value="CHIT_BIND_II"/>
    <property type="match status" value="1"/>
</dbReference>
<dbReference type="PROSITE" id="PS51807">
    <property type="entry name" value="ZF_C2HC_BV"/>
    <property type="match status" value="1"/>
</dbReference>
<accession>Q06670</accession>
<protein>
    <recommendedName>
        <fullName>Capsid-associated protein AC83</fullName>
    </recommendedName>
</protein>
<reference key="1">
    <citation type="journal article" date="1994" name="Virology">
        <title>The complete DNA sequence of Autographa californica nuclear polyhedrosis virus.</title>
        <authorList>
            <person name="Ayres M.D."/>
            <person name="Howard S.C."/>
            <person name="Kuzio J."/>
            <person name="Lopez-Ferber M."/>
            <person name="Possee R.D."/>
        </authorList>
    </citation>
    <scope>NUCLEOTIDE SEQUENCE [LARGE SCALE GENOMIC DNA]</scope>
    <source>
        <strain>C6</strain>
    </source>
</reference>
<reference key="2">
    <citation type="journal article" date="1994" name="J. Gen. Virol.">
        <title>Nucleotide sequence and genetic organization of a 7.3 kb region (map unit 47 to 52.5) of Autographa californica nuclear polyhedrosis virus fragment EcoRI-C.</title>
        <authorList>
            <person name="Kool M."/>
            <person name="Broer R."/>
            <person name="Zuidema D."/>
            <person name="Goldbach R.W."/>
            <person name="Vlak J.M."/>
        </authorList>
    </citation>
    <scope>NUCLEOTIDE SEQUENCE [GENOMIC DNA]</scope>
    <source>
        <strain>E2</strain>
    </source>
</reference>
<reference key="3">
    <citation type="journal article" date="2013" name="J. Virol.">
        <title>The baculovirus core gene ac83 is required for nucleocapsid assembly and per os infectivity of Autographa californica nucleopolyhedrovirus.</title>
        <authorList>
            <person name="Zhu S."/>
            <person name="Wang W."/>
            <person name="Wang Y."/>
            <person name="Yuan M."/>
            <person name="Yang K."/>
        </authorList>
    </citation>
    <scope>FUNCTION</scope>
    <scope>DOMAIN</scope>
    <scope>SUBCELLULAR LOCATION</scope>
</reference>
<organism>
    <name type="scientific">Autographa californica nuclear polyhedrosis virus</name>
    <name type="common">AcMNPV</name>
    <dbReference type="NCBI Taxonomy" id="46015"/>
    <lineage>
        <taxon>Viruses</taxon>
        <taxon>Viruses incertae sedis</taxon>
        <taxon>Naldaviricetes</taxon>
        <taxon>Lefavirales</taxon>
        <taxon>Baculoviridae</taxon>
        <taxon>Alphabaculovirus</taxon>
        <taxon>Alphabaculovirus aucalifornicae</taxon>
    </lineage>
</organism>
<evidence type="ECO:0000255" key="1"/>
<evidence type="ECO:0000255" key="2">
    <source>
        <dbReference type="PROSITE-ProRule" id="PRU00144"/>
    </source>
</evidence>
<evidence type="ECO:0000255" key="3">
    <source>
        <dbReference type="PROSITE-ProRule" id="PRU01148"/>
    </source>
</evidence>
<evidence type="ECO:0000256" key="4">
    <source>
        <dbReference type="SAM" id="MobiDB-lite"/>
    </source>
</evidence>
<evidence type="ECO:0000269" key="5">
    <source>
    </source>
</evidence>
<evidence type="ECO:0000305" key="6"/>
<proteinExistence type="inferred from homology"/>
<organismHost>
    <name type="scientific">Lepidoptera</name>
    <name type="common">butterflies and moths</name>
    <dbReference type="NCBI Taxonomy" id="7088"/>
</organismHost>